<organism>
    <name type="scientific">Angiopteris evecta</name>
    <name type="common">Mule's foot fern</name>
    <name type="synonym">Polypodium evectum</name>
    <dbReference type="NCBI Taxonomy" id="13825"/>
    <lineage>
        <taxon>Eukaryota</taxon>
        <taxon>Viridiplantae</taxon>
        <taxon>Streptophyta</taxon>
        <taxon>Embryophyta</taxon>
        <taxon>Tracheophyta</taxon>
        <taxon>Polypodiopsida</taxon>
        <taxon>Marattiidae</taxon>
        <taxon>Marattiales</taxon>
        <taxon>Marattiaceae</taxon>
        <taxon>Angiopteris</taxon>
    </lineage>
</organism>
<proteinExistence type="inferred from homology"/>
<sequence length="130" mass="14088">MAKPIRKIGLRKGKRKIPKGVIHIQASFNNTIVTVTDIRGQVVSWSSAGACGFKGTRKSTPFAAQTAAENAIRTLIDQGMKQAEVMISGPGPGRETALRAIRRSGVVLSFVRDVTPMPHNGCRPPKKRRV</sequence>
<evidence type="ECO:0000255" key="1">
    <source>
        <dbReference type="HAMAP-Rule" id="MF_01310"/>
    </source>
</evidence>
<evidence type="ECO:0000305" key="2"/>
<feature type="chain" id="PRO_0000294910" description="Small ribosomal subunit protein uS11c">
    <location>
        <begin position="1"/>
        <end position="130"/>
    </location>
</feature>
<protein>
    <recommendedName>
        <fullName evidence="1">Small ribosomal subunit protein uS11c</fullName>
    </recommendedName>
    <alternativeName>
        <fullName evidence="2">30S ribosomal protein S11, chloroplastic</fullName>
    </alternativeName>
</protein>
<keyword id="KW-0150">Chloroplast</keyword>
<keyword id="KW-0934">Plastid</keyword>
<keyword id="KW-0687">Ribonucleoprotein</keyword>
<keyword id="KW-0689">Ribosomal protein</keyword>
<keyword id="KW-0694">RNA-binding</keyword>
<keyword id="KW-0699">rRNA-binding</keyword>
<accession>A2T366</accession>
<dbReference type="EMBL" id="DQ821119">
    <property type="protein sequence ID" value="ABG79633.1"/>
    <property type="molecule type" value="Genomic_DNA"/>
</dbReference>
<dbReference type="RefSeq" id="YP_001023734.1">
    <property type="nucleotide sequence ID" value="NC_008829.1"/>
</dbReference>
<dbReference type="SMR" id="A2T366"/>
<dbReference type="GeneID" id="4788238"/>
<dbReference type="GO" id="GO:0009507">
    <property type="term" value="C:chloroplast"/>
    <property type="evidence" value="ECO:0007669"/>
    <property type="project" value="UniProtKB-SubCell"/>
</dbReference>
<dbReference type="GO" id="GO:1990904">
    <property type="term" value="C:ribonucleoprotein complex"/>
    <property type="evidence" value="ECO:0007669"/>
    <property type="project" value="UniProtKB-KW"/>
</dbReference>
<dbReference type="GO" id="GO:0005840">
    <property type="term" value="C:ribosome"/>
    <property type="evidence" value="ECO:0007669"/>
    <property type="project" value="UniProtKB-KW"/>
</dbReference>
<dbReference type="GO" id="GO:0019843">
    <property type="term" value="F:rRNA binding"/>
    <property type="evidence" value="ECO:0007669"/>
    <property type="project" value="UniProtKB-UniRule"/>
</dbReference>
<dbReference type="GO" id="GO:0003735">
    <property type="term" value="F:structural constituent of ribosome"/>
    <property type="evidence" value="ECO:0007669"/>
    <property type="project" value="InterPro"/>
</dbReference>
<dbReference type="GO" id="GO:0006412">
    <property type="term" value="P:translation"/>
    <property type="evidence" value="ECO:0007669"/>
    <property type="project" value="UniProtKB-UniRule"/>
</dbReference>
<dbReference type="FunFam" id="3.30.420.80:FF:000003">
    <property type="entry name" value="30S ribosomal protein S11, chloroplastic"/>
    <property type="match status" value="1"/>
</dbReference>
<dbReference type="Gene3D" id="3.30.420.80">
    <property type="entry name" value="Ribosomal protein S11"/>
    <property type="match status" value="1"/>
</dbReference>
<dbReference type="HAMAP" id="MF_01310">
    <property type="entry name" value="Ribosomal_uS11"/>
    <property type="match status" value="1"/>
</dbReference>
<dbReference type="InterPro" id="IPR001971">
    <property type="entry name" value="Ribosomal_uS11"/>
</dbReference>
<dbReference type="InterPro" id="IPR019981">
    <property type="entry name" value="Ribosomal_uS11_bac-type"/>
</dbReference>
<dbReference type="InterPro" id="IPR018102">
    <property type="entry name" value="Ribosomal_uS11_CS"/>
</dbReference>
<dbReference type="InterPro" id="IPR036967">
    <property type="entry name" value="Ribosomal_uS11_sf"/>
</dbReference>
<dbReference type="NCBIfam" id="NF003698">
    <property type="entry name" value="PRK05309.1"/>
    <property type="match status" value="1"/>
</dbReference>
<dbReference type="NCBIfam" id="TIGR03632">
    <property type="entry name" value="uS11_bact"/>
    <property type="match status" value="1"/>
</dbReference>
<dbReference type="PANTHER" id="PTHR11759">
    <property type="entry name" value="40S RIBOSOMAL PROTEIN S14/30S RIBOSOMAL PROTEIN S11"/>
    <property type="match status" value="1"/>
</dbReference>
<dbReference type="Pfam" id="PF00411">
    <property type="entry name" value="Ribosomal_S11"/>
    <property type="match status" value="1"/>
</dbReference>
<dbReference type="PIRSF" id="PIRSF002131">
    <property type="entry name" value="Ribosomal_S11"/>
    <property type="match status" value="1"/>
</dbReference>
<dbReference type="SUPFAM" id="SSF53137">
    <property type="entry name" value="Translational machinery components"/>
    <property type="match status" value="1"/>
</dbReference>
<dbReference type="PROSITE" id="PS00054">
    <property type="entry name" value="RIBOSOMAL_S11"/>
    <property type="match status" value="1"/>
</dbReference>
<gene>
    <name evidence="1" type="primary">rps11</name>
</gene>
<name>RR11_ANGEV</name>
<comment type="subunit">
    <text evidence="1">Part of the 30S ribosomal subunit.</text>
</comment>
<comment type="subcellular location">
    <subcellularLocation>
        <location>Plastid</location>
        <location>Chloroplast</location>
    </subcellularLocation>
</comment>
<comment type="similarity">
    <text evidence="1">Belongs to the universal ribosomal protein uS11 family.</text>
</comment>
<geneLocation type="chloroplast"/>
<reference key="1">
    <citation type="journal article" date="2007" name="Am. Fern J.">
        <title>The complete plastid genome sequence of Angiopteris evecta (G. Forst.) Hoffm. (Marattiaceae).</title>
        <authorList>
            <person name="Roper J.M."/>
            <person name="Hansen S.K."/>
            <person name="Wolf P.G."/>
            <person name="Karol K.G."/>
            <person name="Mandoli D.F."/>
            <person name="Everett K.D.E."/>
            <person name="Kuehl J.V."/>
            <person name="Boore J.L."/>
        </authorList>
    </citation>
    <scope>NUCLEOTIDE SEQUENCE [LARGE SCALE GENOMIC DNA]</scope>
</reference>